<dbReference type="EC" id="2.7.7.53" evidence="8"/>
<dbReference type="EC" id="2.7.7.5" evidence="8"/>
<dbReference type="EMBL" id="M31791">
    <property type="protein sequence ID" value="AAA34427.1"/>
    <property type="molecule type" value="Genomic_DNA"/>
</dbReference>
<dbReference type="EMBL" id="M35204">
    <property type="protein sequence ID" value="AAA34581.1"/>
    <property type="molecule type" value="Genomic_DNA"/>
</dbReference>
<dbReference type="EMBL" id="X59720">
    <property type="protein sequence ID" value="CAA42394.2"/>
    <property type="molecule type" value="Genomic_DNA"/>
</dbReference>
<dbReference type="EMBL" id="BK006937">
    <property type="protein sequence ID" value="DAA07435.1"/>
    <property type="molecule type" value="Genomic_DNA"/>
</dbReference>
<dbReference type="PIR" id="S12946">
    <property type="entry name" value="XXBYP1"/>
</dbReference>
<dbReference type="RefSeq" id="NP_009880.2">
    <property type="nucleotide sequence ID" value="NM_001178695.1"/>
</dbReference>
<dbReference type="SMR" id="P16550"/>
<dbReference type="BioGRID" id="30935">
    <property type="interactions" value="89"/>
</dbReference>
<dbReference type="DIP" id="DIP-5139N"/>
<dbReference type="FunCoup" id="P16550">
    <property type="interactions" value="220"/>
</dbReference>
<dbReference type="IntAct" id="P16550">
    <property type="interactions" value="69"/>
</dbReference>
<dbReference type="MINT" id="P16550"/>
<dbReference type="STRING" id="4932.YCL050C"/>
<dbReference type="iPTMnet" id="P16550"/>
<dbReference type="PaxDb" id="4932-YCL050C"/>
<dbReference type="PeptideAtlas" id="P16550"/>
<dbReference type="EnsemblFungi" id="YCL050C_mRNA">
    <property type="protein sequence ID" value="YCL050C"/>
    <property type="gene ID" value="YCL050C"/>
</dbReference>
<dbReference type="GeneID" id="850307"/>
<dbReference type="KEGG" id="sce:YCL050C"/>
<dbReference type="AGR" id="SGD:S000000555"/>
<dbReference type="SGD" id="S000000555">
    <property type="gene designation" value="APA1"/>
</dbReference>
<dbReference type="VEuPathDB" id="FungiDB:YCL050C"/>
<dbReference type="eggNOG" id="ENOG502QRAQ">
    <property type="taxonomic scope" value="Eukaryota"/>
</dbReference>
<dbReference type="GeneTree" id="ENSGT00940000176550"/>
<dbReference type="HOGENOM" id="CLU_049915_1_0_1"/>
<dbReference type="InParanoid" id="P16550"/>
<dbReference type="OMA" id="GLWFFNS"/>
<dbReference type="OrthoDB" id="10267950at2759"/>
<dbReference type="BioCyc" id="MetaCyc:YCL050C-MONOMER"/>
<dbReference type="BioCyc" id="YEAST:YCL050C-MONOMER"/>
<dbReference type="BioGRID-ORCS" id="850307">
    <property type="hits" value="0 hits in 10 CRISPR screens"/>
</dbReference>
<dbReference type="CD-CODE" id="E03F929F">
    <property type="entry name" value="Stress granule"/>
</dbReference>
<dbReference type="PRO" id="PR:P16550"/>
<dbReference type="Proteomes" id="UP000002311">
    <property type="component" value="Chromosome III"/>
</dbReference>
<dbReference type="RNAct" id="P16550">
    <property type="molecule type" value="protein"/>
</dbReference>
<dbReference type="GO" id="GO:0005737">
    <property type="term" value="C:cytoplasm"/>
    <property type="evidence" value="ECO:0007005"/>
    <property type="project" value="SGD"/>
</dbReference>
<dbReference type="GO" id="GO:0005634">
    <property type="term" value="C:nucleus"/>
    <property type="evidence" value="ECO:0007005"/>
    <property type="project" value="SGD"/>
</dbReference>
<dbReference type="GO" id="GO:0005524">
    <property type="term" value="F:ATP binding"/>
    <property type="evidence" value="ECO:0007669"/>
    <property type="project" value="UniProtKB-KW"/>
</dbReference>
<dbReference type="GO" id="GO:0003877">
    <property type="term" value="F:ATP:ADP adenylyltransferase activity"/>
    <property type="evidence" value="ECO:0007669"/>
    <property type="project" value="UniProtKB-EC"/>
</dbReference>
<dbReference type="GO" id="GO:0008796">
    <property type="term" value="F:bis(5'-nucleosyl)-tetraphosphatase activity"/>
    <property type="evidence" value="ECO:0000314"/>
    <property type="project" value="SGD"/>
</dbReference>
<dbReference type="GO" id="GO:0004780">
    <property type="term" value="F:sulfate adenylyltransferase (ADP) activity"/>
    <property type="evidence" value="ECO:0000314"/>
    <property type="project" value="SGD"/>
</dbReference>
<dbReference type="GO" id="GO:0009164">
    <property type="term" value="P:nucleoside catabolic process"/>
    <property type="evidence" value="ECO:0000314"/>
    <property type="project" value="SGD"/>
</dbReference>
<dbReference type="GO" id="GO:0009165">
    <property type="term" value="P:nucleotide biosynthetic process"/>
    <property type="evidence" value="ECO:0000314"/>
    <property type="project" value="SGD"/>
</dbReference>
<dbReference type="FunFam" id="3.30.428.70:FF:000001">
    <property type="entry name" value="APA1p AP4A phosphorylase"/>
    <property type="match status" value="1"/>
</dbReference>
<dbReference type="Gene3D" id="3.30.428.70">
    <property type="match status" value="1"/>
</dbReference>
<dbReference type="InterPro" id="IPR009163">
    <property type="entry name" value="Ap4A_phos1/2"/>
</dbReference>
<dbReference type="InterPro" id="IPR043171">
    <property type="entry name" value="Ap4A_phos1/2-like"/>
</dbReference>
<dbReference type="InterPro" id="IPR045759">
    <property type="entry name" value="Ap4A_phos1/2_N"/>
</dbReference>
<dbReference type="InterPro" id="IPR019200">
    <property type="entry name" value="ATP_adenylylTrfase_C"/>
</dbReference>
<dbReference type="InterPro" id="IPR036265">
    <property type="entry name" value="HIT-like_sf"/>
</dbReference>
<dbReference type="PANTHER" id="PTHR38420">
    <property type="entry name" value="AP-4-A PHOSPHORYLASE II"/>
    <property type="match status" value="1"/>
</dbReference>
<dbReference type="PANTHER" id="PTHR38420:SF1">
    <property type="entry name" value="PUTATIVE (AFU_ORTHOLOGUE AFUA_5G14690)-RELATED"/>
    <property type="match status" value="1"/>
</dbReference>
<dbReference type="Pfam" id="PF19327">
    <property type="entry name" value="Ap4A_phos_N"/>
    <property type="match status" value="1"/>
</dbReference>
<dbReference type="Pfam" id="PF09830">
    <property type="entry name" value="ATP_transf"/>
    <property type="match status" value="1"/>
</dbReference>
<dbReference type="PIRSF" id="PIRSF000846">
    <property type="entry name" value="ATP_adenylyltr"/>
    <property type="match status" value="1"/>
</dbReference>
<dbReference type="SUPFAM" id="SSF54197">
    <property type="entry name" value="HIT-like"/>
    <property type="match status" value="1"/>
</dbReference>
<organism>
    <name type="scientific">Saccharomyces cerevisiae (strain ATCC 204508 / S288c)</name>
    <name type="common">Baker's yeast</name>
    <dbReference type="NCBI Taxonomy" id="559292"/>
    <lineage>
        <taxon>Eukaryota</taxon>
        <taxon>Fungi</taxon>
        <taxon>Dikarya</taxon>
        <taxon>Ascomycota</taxon>
        <taxon>Saccharomycotina</taxon>
        <taxon>Saccharomycetes</taxon>
        <taxon>Saccharomycetales</taxon>
        <taxon>Saccharomycetaceae</taxon>
        <taxon>Saccharomyces</taxon>
    </lineage>
</organism>
<keyword id="KW-0067">ATP-binding</keyword>
<keyword id="KW-0963">Cytoplasm</keyword>
<keyword id="KW-0903">Direct protein sequencing</keyword>
<keyword id="KW-0378">Hydrolase</keyword>
<keyword id="KW-0547">Nucleotide-binding</keyword>
<keyword id="KW-0548">Nucleotidyltransferase</keyword>
<keyword id="KW-0539">Nucleus</keyword>
<keyword id="KW-0597">Phosphoprotein</keyword>
<keyword id="KW-1185">Reference proteome</keyword>
<keyword id="KW-0808">Transferase</keyword>
<protein>
    <recommendedName>
        <fullName>Protein APA1</fullName>
    </recommendedName>
    <domain>
        <recommendedName>
            <fullName evidence="14">Diadenosine 5',5'''-P1,P4-tetraphosphate phosphorylase 1</fullName>
            <shortName>Ap4A phosphorylase 1</shortName>
            <ecNumber evidence="8">2.7.7.53</ecNumber>
        </recommendedName>
        <alternativeName>
            <fullName evidence="14">ADP-sulfurylase</fullName>
            <ecNumber evidence="8">2.7.7.5</ecNumber>
        </alternativeName>
        <alternativeName>
            <fullName>ATP adenylyltransferase</fullName>
        </alternativeName>
        <alternativeName>
            <fullName evidence="15">Diadenosine tetraphosphate alpha,beta-phosphorylase (ADP-forming)</fullName>
        </alternativeName>
    </domain>
</protein>
<feature type="chain" id="PRO_0000064611" description="Protein APA1">
    <location>
        <begin position="1"/>
        <end position="321"/>
    </location>
</feature>
<feature type="region of interest" description="Disordered" evidence="2">
    <location>
        <begin position="50"/>
        <end position="70"/>
    </location>
</feature>
<feature type="active site" description="Nucleophile" evidence="1">
    <location>
        <position position="158"/>
    </location>
</feature>
<feature type="binding site" evidence="1">
    <location>
        <position position="54"/>
    </location>
    <ligand>
        <name>substrate</name>
    </ligand>
</feature>
<feature type="binding site" evidence="1">
    <location>
        <begin position="93"/>
        <end position="94"/>
    </location>
    <ligand>
        <name>substrate</name>
    </ligand>
</feature>
<feature type="binding site" evidence="1">
    <location>
        <position position="145"/>
    </location>
    <ligand>
        <name>substrate</name>
    </ligand>
</feature>
<feature type="binding site" evidence="1">
    <location>
        <begin position="151"/>
        <end position="154"/>
    </location>
    <ligand>
        <name>substrate</name>
    </ligand>
</feature>
<feature type="binding site" evidence="1">
    <location>
        <position position="160"/>
    </location>
    <ligand>
        <name>substrate</name>
    </ligand>
</feature>
<feature type="binding site" evidence="1">
    <location>
        <begin position="273"/>
        <end position="275"/>
    </location>
    <ligand>
        <name>substrate</name>
    </ligand>
</feature>
<feature type="binding site" evidence="1">
    <location>
        <position position="280"/>
    </location>
    <ligand>
        <name>substrate</name>
    </ligand>
</feature>
<feature type="binding site" evidence="1">
    <location>
        <position position="284"/>
    </location>
    <ligand>
        <name>substrate</name>
    </ligand>
</feature>
<feature type="site" description="Transition state stabilizer" evidence="1">
    <location>
        <position position="160"/>
    </location>
</feature>
<feature type="modified residue" description="Phosphothreonine" evidence="19 20 21">
    <location>
        <position position="60"/>
    </location>
</feature>
<feature type="sequence conflict" description="In Ref. 2; AAA34581." evidence="16" ref="2">
    <original>E</original>
    <variation>G</variation>
    <location>
        <position position="100"/>
    </location>
</feature>
<comment type="function">
    <text evidence="5 6 8 9 11 12">Ap4A phosphorylase catalyzes the phosphorolytic degradation of bis(5'-adenosyl) tetraphosphate (Ap4A) into ADP and ATP. Can also use other Np4N' nucleotides (where N and N' stand for A,C,G or U) as substrates with equal efficiency. Cannot catalyze the reverse reaction. Additionally, this enzyme can also catalyze the phosphorolytic degradation of adenosine 5'-phosphosulfate (AMPS) into ADP and sulfate, the reversible exchange reaction between inorganic phosphate and the beta-phosphate of a nucleoside diphosphate (NDP), and the synthesis of Ap4A from AMPS plus ATP.</text>
</comment>
<comment type="catalytic activity">
    <reaction evidence="6 8 10">
        <text>ADP + ATP + H(+) = P(1),P(4)-bis(5'-adenosyl) tetraphosphate + phosphate</text>
        <dbReference type="Rhea" id="RHEA:16577"/>
        <dbReference type="ChEBI" id="CHEBI:15378"/>
        <dbReference type="ChEBI" id="CHEBI:30616"/>
        <dbReference type="ChEBI" id="CHEBI:43474"/>
        <dbReference type="ChEBI" id="CHEBI:58141"/>
        <dbReference type="ChEBI" id="CHEBI:456216"/>
        <dbReference type="EC" id="2.7.7.53"/>
    </reaction>
</comment>
<comment type="catalytic activity">
    <reaction evidence="6 8">
        <text>sulfate + ADP + H(+) = adenosine 5'-phosphosulfate + phosphate</text>
        <dbReference type="Rhea" id="RHEA:16529"/>
        <dbReference type="ChEBI" id="CHEBI:15378"/>
        <dbReference type="ChEBI" id="CHEBI:16189"/>
        <dbReference type="ChEBI" id="CHEBI:43474"/>
        <dbReference type="ChEBI" id="CHEBI:58243"/>
        <dbReference type="ChEBI" id="CHEBI:456216"/>
        <dbReference type="EC" id="2.7.7.5"/>
    </reaction>
</comment>
<comment type="cofactor">
    <cofactor evidence="6">
        <name>a divalent metal cation</name>
        <dbReference type="ChEBI" id="CHEBI:60240"/>
    </cofactor>
</comment>
<comment type="biophysicochemical properties">
    <kinetics>
        <KM evidence="7">39.3 uM for Ap4A</KM>
        <text evidence="7">kcat is 81.2 sec(-1) with Ap4A as substrate.</text>
    </kinetics>
    <phDependence>
        <text evidence="7">Optimum pH is 7.5.</text>
    </phDependence>
</comment>
<comment type="subunit">
    <text evidence="1">Monomer.</text>
</comment>
<comment type="subcellular location">
    <subcellularLocation>
        <location evidence="3">Cytoplasm</location>
    </subcellularLocation>
    <subcellularLocation>
        <location evidence="3">Nucleus</location>
    </subcellularLocation>
</comment>
<comment type="PTM">
    <text evidence="17">The N-terminus is blocked.</text>
</comment>
<comment type="disruption phenotype">
    <text evidence="6">Inactivation of both APA1 and APA2 promotes a great increase in the cellular concentration of bis(5'-nuceleosidyl) tetraphosphate nucleotides.</text>
</comment>
<comment type="miscellaneous">
    <text evidence="4">Present with 19600 molecules/cell in log phase SD medium.</text>
</comment>
<comment type="similarity">
    <text evidence="16">Belongs to the ATP adenylyltransferase family.</text>
</comment>
<sequence>MSIPADIASLISDKYKSAFDNGNLKFIQTETTKTKDPKTSMPYLISHMPSLIEKPERGQTPEGEDPLGKPEEELTVIPEFGGADNKAYKLLLNKFPVIPEHTLLVTNEYQHQTDALTPTDLLTAYKLLCALDNEESDKRHMVFYNSGPASGSSLDHKHLQILQMPEKFVTFQDRLCNGKEHFLPTFNTEPLQDAKVSFAHFVLPMPESEETVDEDLLAMCYISILQRALTFFQDWLNENPELKKSYNLMLTKEWICVVPRSKAFSDEMKIGFNSTGYCGMILTKNDEVFSKITEKPELINDILLECGFPNTSGQKPNEYNY</sequence>
<name>APA1_YEAST</name>
<gene>
    <name evidence="14" type="primary">APA1</name>
    <name evidence="13" type="synonym">DTP</name>
    <name evidence="18" type="ordered locus">YCL050C</name>
    <name type="ORF">YCL50C</name>
</gene>
<accession>P16550</accession>
<accession>D6VQW6</accession>
<reference key="1">
    <citation type="journal article" date="1989" name="J. Bacteriol.">
        <title>Isolation, characterization, and inactivation of the APA1 gene encoding yeast diadenosine 5',5'''-P1,P4-tetraphosphate phosphorylase.</title>
        <authorList>
            <person name="Plateau P."/>
            <person name="Fromant M."/>
            <person name="Schmitter J.-M."/>
            <person name="Buhler J.-M."/>
            <person name="Blanquet S."/>
        </authorList>
    </citation>
    <scope>NUCLEOTIDE SEQUENCE [GENOMIC DNA]</scope>
    <scope>PROTEIN SEQUENCE OF 15-33 AND 39-321</scope>
    <scope>FUNCTION</scope>
    <scope>CATALYTIC ACTIVITY</scope>
</reference>
<reference key="2">
    <citation type="journal article" date="1990" name="Gene">
        <title>Sequencing and enhanced expression of the gene encoding diadenosine 5',5'''-P1,P4-tetraphosphate (Ap4A) phosphorylase in Saccharomyces cerevisiae.</title>
        <authorList>
            <person name="Kaushal V."/>
            <person name="Avila D.M."/>
            <person name="Hardies S.C."/>
            <person name="Barnes L.D."/>
        </authorList>
    </citation>
    <scope>NUCLEOTIDE SEQUENCE [GENOMIC DNA]</scope>
</reference>
<reference key="3">
    <citation type="journal article" date="1992" name="Nature">
        <title>The complete DNA sequence of yeast chromosome III.</title>
        <authorList>
            <person name="Oliver S.G."/>
            <person name="van der Aart Q.J.M."/>
            <person name="Agostoni-Carbone M.L."/>
            <person name="Aigle M."/>
            <person name="Alberghina L."/>
            <person name="Alexandraki D."/>
            <person name="Antoine G."/>
            <person name="Anwar R."/>
            <person name="Ballesta J.P.G."/>
            <person name="Benit P."/>
            <person name="Berben G."/>
            <person name="Bergantino E."/>
            <person name="Biteau N."/>
            <person name="Bolle P.-A."/>
            <person name="Bolotin-Fukuhara M."/>
            <person name="Brown A."/>
            <person name="Brown A.J.P."/>
            <person name="Buhler J.-M."/>
            <person name="Carcano C."/>
            <person name="Carignani G."/>
            <person name="Cederberg H."/>
            <person name="Chanet R."/>
            <person name="Contreras R."/>
            <person name="Crouzet M."/>
            <person name="Daignan-Fornier B."/>
            <person name="Defoor E."/>
            <person name="Delgado M.D."/>
            <person name="Demolder J."/>
            <person name="Doira C."/>
            <person name="Dubois E."/>
            <person name="Dujon B."/>
            <person name="Duesterhoeft A."/>
            <person name="Erdmann D."/>
            <person name="Esteban M."/>
            <person name="Fabre F."/>
            <person name="Fairhead C."/>
            <person name="Faye G."/>
            <person name="Feldmann H."/>
            <person name="Fiers W."/>
            <person name="Francingues-Gaillard M.-C."/>
            <person name="Franco L."/>
            <person name="Frontali L."/>
            <person name="Fukuhara H."/>
            <person name="Fuller L.J."/>
            <person name="Galland P."/>
            <person name="Gent M.E."/>
            <person name="Gigot D."/>
            <person name="Gilliquet V."/>
            <person name="Glansdorff N."/>
            <person name="Goffeau A."/>
            <person name="Grenson M."/>
            <person name="Grisanti P."/>
            <person name="Grivell L.A."/>
            <person name="de Haan M."/>
            <person name="Haasemann M."/>
            <person name="Hatat D."/>
            <person name="Hoenicka J."/>
            <person name="Hegemann J.H."/>
            <person name="Herbert C.J."/>
            <person name="Hilger F."/>
            <person name="Hohmann S."/>
            <person name="Hollenberg C.P."/>
            <person name="Huse K."/>
            <person name="Iborra F."/>
            <person name="Indge K.J."/>
            <person name="Isono K."/>
            <person name="Jacq C."/>
            <person name="Jacquet M."/>
            <person name="James C.M."/>
            <person name="Jauniaux J.-C."/>
            <person name="Jia Y."/>
            <person name="Jimenez A."/>
            <person name="Kelly A."/>
            <person name="Kleinhans U."/>
            <person name="Kreisl P."/>
            <person name="Lanfranchi G."/>
            <person name="Lewis C."/>
            <person name="van der Linden C.G."/>
            <person name="Lucchini G."/>
            <person name="Lutzenkirchen K."/>
            <person name="Maat M.J."/>
            <person name="Mallet L."/>
            <person name="Mannhaupt G."/>
            <person name="Martegani E."/>
            <person name="Mathieu A."/>
            <person name="Maurer C.T.C."/>
            <person name="McConnell D."/>
            <person name="McKee R.A."/>
            <person name="Messenguy F."/>
            <person name="Mewes H.-W."/>
            <person name="Molemans F."/>
            <person name="Montague M.A."/>
            <person name="Muzi Falconi M."/>
            <person name="Navas L."/>
            <person name="Newlon C.S."/>
            <person name="Noone D."/>
            <person name="Pallier C."/>
            <person name="Panzeri L."/>
            <person name="Pearson B.M."/>
            <person name="Perea J."/>
            <person name="Philippsen P."/>
            <person name="Pierard A."/>
            <person name="Planta R.J."/>
            <person name="Plevani P."/>
            <person name="Poetsch B."/>
            <person name="Pohl F.M."/>
            <person name="Purnelle B."/>
            <person name="Ramezani Rad M."/>
            <person name="Rasmussen S.W."/>
            <person name="Raynal A."/>
            <person name="Remacha M.A."/>
            <person name="Richterich P."/>
            <person name="Roberts A.B."/>
            <person name="Rodriguez F."/>
            <person name="Sanz E."/>
            <person name="Schaaff-Gerstenschlaeger I."/>
            <person name="Scherens B."/>
            <person name="Schweitzer B."/>
            <person name="Shu Y."/>
            <person name="Skala J."/>
            <person name="Slonimski P.P."/>
            <person name="Sor F."/>
            <person name="Soustelle C."/>
            <person name="Spiegelberg R."/>
            <person name="Stateva L.I."/>
            <person name="Steensma H.Y."/>
            <person name="Steiner S."/>
            <person name="Thierry A."/>
            <person name="Thireos G."/>
            <person name="Tzermia M."/>
            <person name="Urrestarazu L.A."/>
            <person name="Valle G."/>
            <person name="Vetter I."/>
            <person name="van Vliet-Reedijk J.C."/>
            <person name="Voet M."/>
            <person name="Volckaert G."/>
            <person name="Vreken P."/>
            <person name="Wang H."/>
            <person name="Warmington J.R."/>
            <person name="von Wettstein D."/>
            <person name="Wicksteed B.L."/>
            <person name="Wilson C."/>
            <person name="Wurst H."/>
            <person name="Xu G."/>
            <person name="Yoshikawa A."/>
            <person name="Zimmermann F.K."/>
            <person name="Sgouros J.G."/>
        </authorList>
    </citation>
    <scope>NUCLEOTIDE SEQUENCE [LARGE SCALE GENOMIC DNA]</scope>
    <source>
        <strain>ATCC 204508 / S288c</strain>
    </source>
</reference>
<reference key="4">
    <citation type="submission" date="2001-06" db="EMBL/GenBank/DDBJ databases">
        <authorList>
            <person name="Mewes H.-W."/>
        </authorList>
    </citation>
    <scope>SEQUENCE REVISION TO 100</scope>
</reference>
<reference key="5">
    <citation type="journal article" date="2014" name="G3 (Bethesda)">
        <title>The reference genome sequence of Saccharomyces cerevisiae: Then and now.</title>
        <authorList>
            <person name="Engel S.R."/>
            <person name="Dietrich F.S."/>
            <person name="Fisk D.G."/>
            <person name="Binkley G."/>
            <person name="Balakrishnan R."/>
            <person name="Costanzo M.C."/>
            <person name="Dwight S.S."/>
            <person name="Hitz B.C."/>
            <person name="Karra K."/>
            <person name="Nash R.S."/>
            <person name="Weng S."/>
            <person name="Wong E.D."/>
            <person name="Lloyd P."/>
            <person name="Skrzypek M.S."/>
            <person name="Miyasato S.R."/>
            <person name="Simison M."/>
            <person name="Cherry J.M."/>
        </authorList>
    </citation>
    <scope>GENOME REANNOTATION</scope>
    <source>
        <strain>ATCC 204508 / S288c</strain>
    </source>
</reference>
<reference key="6">
    <citation type="journal article" date="1985" name="J. Biol. Chem.">
        <title>Phosphorolytic cleavage of diadenosine 5',5'''-P1,P4-tetraphosphate. Properties of homogeneous diadenosine 5',5'''-P1,P4-tetraphosphate alpha, beta-phosphorylase from Saccharomyces cerevisiae.</title>
        <authorList>
            <person name="Guranowski A."/>
            <person name="Blanquet S."/>
        </authorList>
    </citation>
    <scope>CATALYTIC ACTIVITY</scope>
</reference>
<reference key="7">
    <citation type="journal article" date="1986" name="J. Biol. Chem.">
        <title>Diadenosine 5',5'''-P1, P4-tetraphosphate alpha, beta-phosphorylase from yeast supports nucleoside diphosphate-phosphate exchange.</title>
        <authorList>
            <person name="Guranowski A."/>
            <person name="Blanquet S."/>
        </authorList>
    </citation>
    <scope>FUNCTION</scope>
</reference>
<reference key="8">
    <citation type="journal article" date="1988" name="Biochemistry">
        <title>Synthesis of diadenosine 5',5'''-P1,P4-tetraphosphate (AppppA) from adenosine 5'-phosphosulfate and adenosine 5'-triphosphate catalyzed by yeast AppppA phosphorylase.</title>
        <authorList>
            <person name="Guranowski A."/>
            <person name="Just G."/>
            <person name="Holler E."/>
            <person name="Jakubowski H."/>
        </authorList>
    </citation>
    <scope>FUNCTION</scope>
    <scope>CATALYTIC ACTIVITY</scope>
</reference>
<reference key="9">
    <citation type="journal article" date="1990" name="J. Bacteriol.">
        <title>Catabolism of bis(5'-nucleosidyl) tetraphosphates in Saccharomyces cerevisiae.</title>
        <authorList>
            <person name="Plateau P."/>
            <person name="Fromant M."/>
            <person name="Schmitter J.-M."/>
            <person name="Blanquet S."/>
        </authorList>
    </citation>
    <scope>FUNCTION</scope>
    <scope>CATALYTIC ACTIVITY</scope>
    <scope>COFACTOR</scope>
    <scope>SUBSTRATE SPECIFICITY</scope>
    <scope>DISRUPTION PHENOTYPE</scope>
</reference>
<reference key="10">
    <citation type="journal article" date="1991" name="J. Bacteriol.">
        <title>A paradoxical increase of a metabolite upon increased expression of its catabolic enzyme: the case of diadenosine tetraphosphate (Ap4A) and Ap4A phosphorylase I in Saccharomyces cerevisiae.</title>
        <authorList>
            <person name="Avila D.M."/>
            <person name="Robinson A.K."/>
            <person name="Kaushal V."/>
            <person name="Barnes L.D."/>
        </authorList>
    </citation>
    <scope>FUNCTION</scope>
</reference>
<reference key="11">
    <citation type="journal article" date="1995" name="J. Biol. Chem.">
        <title>An alleged yeast polyphosphate kinase is actually diadenosine-5', 5'''-P1,P4-tetraphosphate alpha,beta-phosphorylase.</title>
        <authorList>
            <person name="Booth J.W."/>
            <person name="Guidotti G."/>
        </authorList>
    </citation>
    <scope>FUNCTION</scope>
</reference>
<reference key="12">
    <citation type="journal article" date="2003" name="Nature">
        <title>Global analysis of protein localization in budding yeast.</title>
        <authorList>
            <person name="Huh W.-K."/>
            <person name="Falvo J.V."/>
            <person name="Gerke L.C."/>
            <person name="Carroll A.S."/>
            <person name="Howson R.W."/>
            <person name="Weissman J.S."/>
            <person name="O'Shea E.K."/>
        </authorList>
    </citation>
    <scope>SUBCELLULAR LOCATION [LARGE SCALE ANALYSIS]</scope>
</reference>
<reference key="13">
    <citation type="journal article" date="2003" name="Nature">
        <title>Global analysis of protein expression in yeast.</title>
        <authorList>
            <person name="Ghaemmaghami S."/>
            <person name="Huh W.-K."/>
            <person name="Bower K."/>
            <person name="Howson R.W."/>
            <person name="Belle A."/>
            <person name="Dephoure N."/>
            <person name="O'Shea E.K."/>
            <person name="Weissman J.S."/>
        </authorList>
    </citation>
    <scope>LEVEL OF PROTEIN EXPRESSION [LARGE SCALE ANALYSIS]</scope>
</reference>
<reference key="14">
    <citation type="journal article" date="2007" name="J. Proteome Res.">
        <title>Large-scale phosphorylation analysis of alpha-factor-arrested Saccharomyces cerevisiae.</title>
        <authorList>
            <person name="Li X."/>
            <person name="Gerber S.A."/>
            <person name="Rudner A.D."/>
            <person name="Beausoleil S.A."/>
            <person name="Haas W."/>
            <person name="Villen J."/>
            <person name="Elias J.E."/>
            <person name="Gygi S.P."/>
        </authorList>
    </citation>
    <scope>PHOSPHORYLATION [LARGE SCALE ANALYSIS] AT THR-60</scope>
    <scope>IDENTIFICATION BY MASS SPECTROMETRY [LARGE SCALE ANALYSIS]</scope>
    <source>
        <strain>ADR376</strain>
    </source>
</reference>
<reference key="15">
    <citation type="journal article" date="2008" name="Mol. Cell. Proteomics">
        <title>A multidimensional chromatography technology for in-depth phosphoproteome analysis.</title>
        <authorList>
            <person name="Albuquerque C.P."/>
            <person name="Smolka M.B."/>
            <person name="Payne S.H."/>
            <person name="Bafna V."/>
            <person name="Eng J."/>
            <person name="Zhou H."/>
        </authorList>
    </citation>
    <scope>PHOSPHORYLATION [LARGE SCALE ANALYSIS] AT THR-60</scope>
    <scope>IDENTIFICATION BY MASS SPECTROMETRY [LARGE SCALE ANALYSIS]</scope>
</reference>
<reference key="16">
    <citation type="journal article" date="2009" name="Science">
        <title>Global analysis of Cdk1 substrate phosphorylation sites provides insights into evolution.</title>
        <authorList>
            <person name="Holt L.J."/>
            <person name="Tuch B.B."/>
            <person name="Villen J."/>
            <person name="Johnson A.D."/>
            <person name="Gygi S.P."/>
            <person name="Morgan D.O."/>
        </authorList>
    </citation>
    <scope>PHOSPHORYLATION [LARGE SCALE ANALYSIS] AT THR-60</scope>
    <scope>IDENTIFICATION BY MASS SPECTROMETRY [LARGE SCALE ANALYSIS]</scope>
</reference>
<reference key="17">
    <citation type="journal article" date="2013" name="J. Mol. Biol.">
        <title>Structures of yeast Apa2 reveal catalytic insights into a canonical AP(4)A phosphorylase of the histidine triad superfamily.</title>
        <authorList>
            <person name="Hou W.T."/>
            <person name="Li W.Z."/>
            <person name="Chen Y."/>
            <person name="Jiang Y.L."/>
            <person name="Zhou C.Z."/>
        </authorList>
    </citation>
    <scope>BIOPHYSICOCHEMICAL PROPERTIES</scope>
</reference>
<evidence type="ECO:0000250" key="1">
    <source>
        <dbReference type="UniProtKB" id="P22108"/>
    </source>
</evidence>
<evidence type="ECO:0000256" key="2">
    <source>
        <dbReference type="SAM" id="MobiDB-lite"/>
    </source>
</evidence>
<evidence type="ECO:0000269" key="3">
    <source>
    </source>
</evidence>
<evidence type="ECO:0000269" key="4">
    <source>
    </source>
</evidence>
<evidence type="ECO:0000269" key="5">
    <source>
    </source>
</evidence>
<evidence type="ECO:0000269" key="6">
    <source>
    </source>
</evidence>
<evidence type="ECO:0000269" key="7">
    <source>
    </source>
</evidence>
<evidence type="ECO:0000269" key="8">
    <source>
    </source>
</evidence>
<evidence type="ECO:0000269" key="9">
    <source>
    </source>
</evidence>
<evidence type="ECO:0000269" key="10">
    <source>
    </source>
</evidence>
<evidence type="ECO:0000269" key="11">
    <source>
    </source>
</evidence>
<evidence type="ECO:0000269" key="12">
    <source>
    </source>
</evidence>
<evidence type="ECO:0000303" key="13">
    <source>
    </source>
</evidence>
<evidence type="ECO:0000303" key="14">
    <source>
    </source>
</evidence>
<evidence type="ECO:0000303" key="15">
    <source>
    </source>
</evidence>
<evidence type="ECO:0000305" key="16"/>
<evidence type="ECO:0000305" key="17">
    <source>
    </source>
</evidence>
<evidence type="ECO:0000312" key="18">
    <source>
        <dbReference type="SGD" id="S000000555"/>
    </source>
</evidence>
<evidence type="ECO:0007744" key="19">
    <source>
    </source>
</evidence>
<evidence type="ECO:0007744" key="20">
    <source>
    </source>
</evidence>
<evidence type="ECO:0007744" key="21">
    <source>
    </source>
</evidence>
<proteinExistence type="evidence at protein level"/>